<organism>
    <name type="scientific">Caenorhabditis elegans</name>
    <dbReference type="NCBI Taxonomy" id="6239"/>
    <lineage>
        <taxon>Eukaryota</taxon>
        <taxon>Metazoa</taxon>
        <taxon>Ecdysozoa</taxon>
        <taxon>Nematoda</taxon>
        <taxon>Chromadorea</taxon>
        <taxon>Rhabditida</taxon>
        <taxon>Rhabditina</taxon>
        <taxon>Rhabditomorpha</taxon>
        <taxon>Rhabditoidea</taxon>
        <taxon>Rhabditidae</taxon>
        <taxon>Peloderinae</taxon>
        <taxon>Caenorhabditis</taxon>
    </lineage>
</organism>
<proteinExistence type="evidence at protein level"/>
<dbReference type="EC" id="2.3.1.-" evidence="2"/>
<dbReference type="EMBL" id="BX284605">
    <property type="protein sequence ID" value="CAA96659.2"/>
    <property type="molecule type" value="Genomic_DNA"/>
</dbReference>
<dbReference type="PIR" id="T22689">
    <property type="entry name" value="T22689"/>
</dbReference>
<dbReference type="RefSeq" id="NP_505971.2">
    <property type="nucleotide sequence ID" value="NM_073570.4"/>
</dbReference>
<dbReference type="FunCoup" id="Q20800">
    <property type="interactions" value="343"/>
</dbReference>
<dbReference type="STRING" id="6239.F55A11.5.1"/>
<dbReference type="SwissLipids" id="SLP:000001013"/>
<dbReference type="PaxDb" id="6239-F55A11.5"/>
<dbReference type="PeptideAtlas" id="Q20800"/>
<dbReference type="EnsemblMetazoa" id="F55A11.5.1">
    <property type="protein sequence ID" value="F55A11.5.1"/>
    <property type="gene ID" value="WBGene00044631"/>
</dbReference>
<dbReference type="GeneID" id="186277"/>
<dbReference type="KEGG" id="cel:CELE_F55A11.5"/>
<dbReference type="UCSC" id="F55A11.5">
    <property type="organism name" value="c. elegans"/>
</dbReference>
<dbReference type="AGR" id="WB:WBGene00044631"/>
<dbReference type="CTD" id="186277"/>
<dbReference type="WormBase" id="F55A11.5">
    <property type="protein sequence ID" value="CE39507"/>
    <property type="gene ID" value="WBGene00044631"/>
    <property type="gene designation" value="bus-18"/>
</dbReference>
<dbReference type="eggNOG" id="KOG1505">
    <property type="taxonomic scope" value="Eukaryota"/>
</dbReference>
<dbReference type="GeneTree" id="ENSGT00950000182836"/>
<dbReference type="HOGENOM" id="CLU_041844_4_0_1"/>
<dbReference type="InParanoid" id="Q20800"/>
<dbReference type="OMA" id="MDRAISY"/>
<dbReference type="OrthoDB" id="186786at2759"/>
<dbReference type="PhylomeDB" id="Q20800"/>
<dbReference type="UniPathway" id="UPA00949"/>
<dbReference type="PRO" id="PR:Q20800"/>
<dbReference type="Proteomes" id="UP000001940">
    <property type="component" value="Chromosome V"/>
</dbReference>
<dbReference type="Bgee" id="WBGene00044631">
    <property type="expression patterns" value="Expressed in embryo and 3 other cell types or tissues"/>
</dbReference>
<dbReference type="GO" id="GO:0012505">
    <property type="term" value="C:endomembrane system"/>
    <property type="evidence" value="ECO:0000318"/>
    <property type="project" value="GO_Central"/>
</dbReference>
<dbReference type="GO" id="GO:0005783">
    <property type="term" value="C:endoplasmic reticulum"/>
    <property type="evidence" value="ECO:0000314"/>
    <property type="project" value="WormBase"/>
</dbReference>
<dbReference type="GO" id="GO:0005789">
    <property type="term" value="C:endoplasmic reticulum membrane"/>
    <property type="evidence" value="ECO:0007669"/>
    <property type="project" value="UniProtKB-SubCell"/>
</dbReference>
<dbReference type="GO" id="GO:0016746">
    <property type="term" value="F:acyltransferase activity"/>
    <property type="evidence" value="ECO:0000315"/>
    <property type="project" value="WormBase"/>
</dbReference>
<dbReference type="GO" id="GO:0002009">
    <property type="term" value="P:morphogenesis of an epithelium"/>
    <property type="evidence" value="ECO:0000315"/>
    <property type="project" value="WormBase"/>
</dbReference>
<dbReference type="GO" id="GO:0036149">
    <property type="term" value="P:phosphatidylinositol acyl-chain remodeling"/>
    <property type="evidence" value="ECO:0000318"/>
    <property type="project" value="GO_Central"/>
</dbReference>
<dbReference type="GO" id="GO:0046488">
    <property type="term" value="P:phosphatidylinositol metabolic process"/>
    <property type="evidence" value="ECO:0000315"/>
    <property type="project" value="WormBase"/>
</dbReference>
<dbReference type="CDD" id="cd07990">
    <property type="entry name" value="LPLAT_LCLAT1-like"/>
    <property type="match status" value="1"/>
</dbReference>
<dbReference type="InterPro" id="IPR032098">
    <property type="entry name" value="Acyltransf_C"/>
</dbReference>
<dbReference type="InterPro" id="IPR002123">
    <property type="entry name" value="Plipid/glycerol_acylTrfase"/>
</dbReference>
<dbReference type="PANTHER" id="PTHR10983">
    <property type="entry name" value="1-ACYLGLYCEROL-3-PHOSPHATE ACYLTRANSFERASE-RELATED"/>
    <property type="match status" value="1"/>
</dbReference>
<dbReference type="PANTHER" id="PTHR10983:SF20">
    <property type="entry name" value="LYSOPHOSPHATIDYLINOSITOL ACYLTRANSFERASE 10"/>
    <property type="match status" value="1"/>
</dbReference>
<dbReference type="Pfam" id="PF16076">
    <property type="entry name" value="Acyltransf_C"/>
    <property type="match status" value="1"/>
</dbReference>
<dbReference type="Pfam" id="PF01553">
    <property type="entry name" value="Acyltransferase"/>
    <property type="match status" value="1"/>
</dbReference>
<dbReference type="SMART" id="SM00563">
    <property type="entry name" value="PlsC"/>
    <property type="match status" value="1"/>
</dbReference>
<dbReference type="SUPFAM" id="SSF69593">
    <property type="entry name" value="Glycerol-3-phosphate (1)-acyltransferase"/>
    <property type="match status" value="1"/>
</dbReference>
<sequence length="391" mass="46520">MRIPCLLRPLLGWFFGLCILFSALFGNYIITLFLGLPILGRHKQWRNLMDRAISYWMTIPMGLLEFLMGVRIRVSGDEIEFGSPAMIVMNHRTRLDWMYMWCALYQINPWLITSNKISLKAQLKKLPGAGFGMAAAQFVFLERNAEVDKRSFDDAIDYFKNIDKKYQILLFPEGTDKSEWTTLKSREFAKKNGLRHLDYVLYPRTTGFLHLLNKMREQEYVEYIYDITIAYPYNIVQSEIDLVLKGASPREVHFHIRKIPISQVPLNEQDASRWLTDRWTIKEQLLHDFYSEEQPINRQFPVERGDGVWRSWKEPRRHFYVKLTSLMFWTLVISFCSYHIFFVRTLQLGFLYFFVISFYLSWRYGGIDKYIIFKWQESRKSLQKSPSSSSI</sequence>
<reference evidence="6" key="1">
    <citation type="journal article" date="1998" name="Science">
        <title>Genome sequence of the nematode C. elegans: a platform for investigating biology.</title>
        <authorList>
            <consortium name="The C. elegans sequencing consortium"/>
        </authorList>
    </citation>
    <scope>NUCLEOTIDE SEQUENCE [LARGE SCALE GENOMIC DNA]</scope>
    <source>
        <strain evidence="6">Bristol N2</strain>
    </source>
</reference>
<reference key="2">
    <citation type="journal article" date="2010" name="Mol. Biol. Cell">
        <title>Intracellular phospholipase A1 and acyltransferase, which are involved in Caenorhabditis elegans stem cell divisions, determine the sn-1 fatty acyl chain of phosphatidylinositol.</title>
        <authorList>
            <person name="Imae R."/>
            <person name="Inoue T."/>
            <person name="Kimura M."/>
            <person name="Kanamori T."/>
            <person name="Tomioka N.H."/>
            <person name="Kage-Nakadai E."/>
            <person name="Mitani S."/>
            <person name="Arai H."/>
        </authorList>
    </citation>
    <scope>FUNCTION</scope>
    <scope>CATALYTIC ACTIVITY</scope>
    <scope>TISSUE SPECIFICITY</scope>
    <scope>SUBCELLULAR LOCATION</scope>
    <scope>PATHWAY</scope>
    <scope>DISRUPTION PHENOTYPE</scope>
</reference>
<evidence type="ECO:0000255" key="1"/>
<evidence type="ECO:0000269" key="2">
    <source>
    </source>
</evidence>
<evidence type="ECO:0000303" key="3">
    <source>
    </source>
</evidence>
<evidence type="ECO:0000305" key="4"/>
<evidence type="ECO:0000312" key="5">
    <source>
        <dbReference type="EMBL" id="CAA96659.2"/>
    </source>
</evidence>
<evidence type="ECO:0000312" key="6">
    <source>
        <dbReference type="Proteomes" id="UP000001940"/>
    </source>
</evidence>
<evidence type="ECO:0000312" key="7">
    <source>
        <dbReference type="WormBase" id="F55A11.5"/>
    </source>
</evidence>
<accession>Q20800</accession>
<gene>
    <name evidence="5 7" type="primary">bus-18</name>
    <name evidence="7" type="ORF">F55A11.5</name>
</gene>
<feature type="chain" id="PRO_0000453137" description="Lysophosphatidylinositol acyltransferase 10">
    <location>
        <begin position="1"/>
        <end position="391"/>
    </location>
</feature>
<feature type="transmembrane region" description="Helical" evidence="1">
    <location>
        <begin position="10"/>
        <end position="30"/>
    </location>
</feature>
<feature type="transmembrane region" description="Helical" evidence="1">
    <location>
        <begin position="52"/>
        <end position="72"/>
    </location>
</feature>
<feature type="transmembrane region" description="Helical" evidence="1">
    <location>
        <begin position="97"/>
        <end position="119"/>
    </location>
</feature>
<feature type="transmembrane region" description="Helical" evidence="1">
    <location>
        <begin position="323"/>
        <end position="343"/>
    </location>
</feature>
<feature type="transmembrane region" description="Helical" evidence="1">
    <location>
        <begin position="347"/>
        <end position="367"/>
    </location>
</feature>
<comment type="function">
    <text evidence="2">Acyltransferase required for the fatty acid remodeling of phosphatidylinositol (1,2-diacyl-sn-glycero-3-phosphoinositol or PI). Mediates the conversion of lysophosphatidylinositol (2-acylglycerophosphatidylinositol or LPI) into PI (LPIAT activity). Has preference for saturated and mono-unsaturated fatty acids as acyl donors and sn-2-acyl lysoPI (2-acyl-sn-glycero-3-phospho-D-myo-inositol) as acyl acceptor. Contributes to the asymmetric cell division of epithelial cells. Asymmetric cell division is the fundamental mechanism by which multicellular organisms generate cell diversity.</text>
</comment>
<comment type="catalytic activity">
    <reaction evidence="2">
        <text>a 2-acyl-sn-glycero-3-phospho-D-myo-inositol + an acyl-CoA = a 1,2-diacyl-sn-glycero-3-phospho-(1D-myo-inositol) + CoA</text>
        <dbReference type="Rhea" id="RHEA:35271"/>
        <dbReference type="ChEBI" id="CHEBI:57287"/>
        <dbReference type="ChEBI" id="CHEBI:57880"/>
        <dbReference type="ChEBI" id="CHEBI:58342"/>
        <dbReference type="ChEBI" id="CHEBI:64872"/>
    </reaction>
    <physiologicalReaction direction="left-to-right" evidence="2">
        <dbReference type="Rhea" id="RHEA:35272"/>
    </physiologicalReaction>
</comment>
<comment type="catalytic activity">
    <reaction evidence="2">
        <text>a 2-acyl-sn-glycero-3-phospho-D-myo-inositol + octadecanoyl-CoA = 1-octadecanoyl-2-acyl-sn-glycero-3-phospho-1D-myo-inositol + CoA</text>
        <dbReference type="Rhea" id="RHEA:43964"/>
        <dbReference type="ChEBI" id="CHEBI:57287"/>
        <dbReference type="ChEBI" id="CHEBI:57394"/>
        <dbReference type="ChEBI" id="CHEBI:64872"/>
        <dbReference type="ChEBI" id="CHEBI:65055"/>
    </reaction>
    <physiologicalReaction direction="left-to-right" evidence="2">
        <dbReference type="Rhea" id="RHEA:43965"/>
    </physiologicalReaction>
</comment>
<comment type="pathway">
    <text evidence="2">Phospholipid metabolism; phosphatidylinositol metabolism.</text>
</comment>
<comment type="subcellular location">
    <subcellularLocation>
        <location evidence="2">Endoplasmic reticulum membrane</location>
        <topology evidence="1">Multi-pass membrane protein</topology>
    </subcellularLocation>
</comment>
<comment type="tissue specificity">
    <text evidence="2">Expressed in seam cells, vulval epithelial cells and the major epithelial syncytium hyp7, and in several head neurons including AIY interneurons.</text>
</comment>
<comment type="disruption phenotype">
    <text evidence="2">Mutants showed defects in vulval morphology and in the asymmetric division of stem cell-like epithelial cells.</text>
</comment>
<comment type="similarity">
    <text evidence="4">Belongs to the 1-acyl-sn-glycerol-3-phosphate acyltransferase family.</text>
</comment>
<protein>
    <recommendedName>
        <fullName>Lysophosphatidylinositol acyltransferase 10</fullName>
        <shortName evidence="3">ACL-10</shortName>
        <shortName>sn-2 acyl LPIAT</shortName>
        <ecNumber evidence="2">2.3.1.-</ecNumber>
    </recommendedName>
    <alternativeName>
        <fullName>2-acylglycerol 3-phosphate O-acyltransferase 10</fullName>
        <shortName>AGPAT 10</shortName>
    </alternativeName>
    <alternativeName>
        <fullName evidence="5">PlsC domain-containing protein</fullName>
    </alternativeName>
</protein>
<keyword id="KW-0012">Acyltransferase</keyword>
<keyword id="KW-0256">Endoplasmic reticulum</keyword>
<keyword id="KW-0472">Membrane</keyword>
<keyword id="KW-1185">Reference proteome</keyword>
<keyword id="KW-0808">Transferase</keyword>
<keyword id="KW-0812">Transmembrane</keyword>
<keyword id="KW-1133">Transmembrane helix</keyword>
<name>LPIAT_CAEEL</name>